<sequence>MELKSMDPVEMPIFGSTLKLMKFWSYLFVHNWRRYVAMTPYIIINCTQYVDIYLSTESLDFIIRNVYLAVLFTNTVVRGVLLCVQRFSYERFINILKSFYIELLQSDDPIINILVKETTRLSVLISRINLLMGCCTCIGFVTYPIFGSERVLPYGMYLPTIDEYKYASPYYEIFFVIQAIMAPMGCCMYIPYTNMVVTFTLFAILMCRVLQHKLRSLEKLKNEQVRGEIIWCIKYQLKLSGFVDSMNALNTHLHLVEFLCFGAMLCVLLFSLIIAQTIAQTVIVIAYMVMIFANSVVLYYVANELYFQSFDIAIAAYESNWMDFDVDTQKTLKFLIMRSQKPLAILVGGTYPMNLKMLQSLLNAIYSFFTLLRRVYG</sequence>
<reference key="1">
    <citation type="journal article" date="2000" name="Science">
        <title>The genome sequence of Drosophila melanogaster.</title>
        <authorList>
            <person name="Adams M.D."/>
            <person name="Celniker S.E."/>
            <person name="Holt R.A."/>
            <person name="Evans C.A."/>
            <person name="Gocayne J.D."/>
            <person name="Amanatides P.G."/>
            <person name="Scherer S.E."/>
            <person name="Li P.W."/>
            <person name="Hoskins R.A."/>
            <person name="Galle R.F."/>
            <person name="George R.A."/>
            <person name="Lewis S.E."/>
            <person name="Richards S."/>
            <person name="Ashburner M."/>
            <person name="Henderson S.N."/>
            <person name="Sutton G.G."/>
            <person name="Wortman J.R."/>
            <person name="Yandell M.D."/>
            <person name="Zhang Q."/>
            <person name="Chen L.X."/>
            <person name="Brandon R.C."/>
            <person name="Rogers Y.-H.C."/>
            <person name="Blazej R.G."/>
            <person name="Champe M."/>
            <person name="Pfeiffer B.D."/>
            <person name="Wan K.H."/>
            <person name="Doyle C."/>
            <person name="Baxter E.G."/>
            <person name="Helt G."/>
            <person name="Nelson C.R."/>
            <person name="Miklos G.L.G."/>
            <person name="Abril J.F."/>
            <person name="Agbayani A."/>
            <person name="An H.-J."/>
            <person name="Andrews-Pfannkoch C."/>
            <person name="Baldwin D."/>
            <person name="Ballew R.M."/>
            <person name="Basu A."/>
            <person name="Baxendale J."/>
            <person name="Bayraktaroglu L."/>
            <person name="Beasley E.M."/>
            <person name="Beeson K.Y."/>
            <person name="Benos P.V."/>
            <person name="Berman B.P."/>
            <person name="Bhandari D."/>
            <person name="Bolshakov S."/>
            <person name="Borkova D."/>
            <person name="Botchan M.R."/>
            <person name="Bouck J."/>
            <person name="Brokstein P."/>
            <person name="Brottier P."/>
            <person name="Burtis K.C."/>
            <person name="Busam D.A."/>
            <person name="Butler H."/>
            <person name="Cadieu E."/>
            <person name="Center A."/>
            <person name="Chandra I."/>
            <person name="Cherry J.M."/>
            <person name="Cawley S."/>
            <person name="Dahlke C."/>
            <person name="Davenport L.B."/>
            <person name="Davies P."/>
            <person name="de Pablos B."/>
            <person name="Delcher A."/>
            <person name="Deng Z."/>
            <person name="Mays A.D."/>
            <person name="Dew I."/>
            <person name="Dietz S.M."/>
            <person name="Dodson K."/>
            <person name="Doup L.E."/>
            <person name="Downes M."/>
            <person name="Dugan-Rocha S."/>
            <person name="Dunkov B.C."/>
            <person name="Dunn P."/>
            <person name="Durbin K.J."/>
            <person name="Evangelista C.C."/>
            <person name="Ferraz C."/>
            <person name="Ferriera S."/>
            <person name="Fleischmann W."/>
            <person name="Fosler C."/>
            <person name="Gabrielian A.E."/>
            <person name="Garg N.S."/>
            <person name="Gelbart W.M."/>
            <person name="Glasser K."/>
            <person name="Glodek A."/>
            <person name="Gong F."/>
            <person name="Gorrell J.H."/>
            <person name="Gu Z."/>
            <person name="Guan P."/>
            <person name="Harris M."/>
            <person name="Harris N.L."/>
            <person name="Harvey D.A."/>
            <person name="Heiman T.J."/>
            <person name="Hernandez J.R."/>
            <person name="Houck J."/>
            <person name="Hostin D."/>
            <person name="Houston K.A."/>
            <person name="Howland T.J."/>
            <person name="Wei M.-H."/>
            <person name="Ibegwam C."/>
            <person name="Jalali M."/>
            <person name="Kalush F."/>
            <person name="Karpen G.H."/>
            <person name="Ke Z."/>
            <person name="Kennison J.A."/>
            <person name="Ketchum K.A."/>
            <person name="Kimmel B.E."/>
            <person name="Kodira C.D."/>
            <person name="Kraft C.L."/>
            <person name="Kravitz S."/>
            <person name="Kulp D."/>
            <person name="Lai Z."/>
            <person name="Lasko P."/>
            <person name="Lei Y."/>
            <person name="Levitsky A.A."/>
            <person name="Li J.H."/>
            <person name="Li Z."/>
            <person name="Liang Y."/>
            <person name="Lin X."/>
            <person name="Liu X."/>
            <person name="Mattei B."/>
            <person name="McIntosh T.C."/>
            <person name="McLeod M.P."/>
            <person name="McPherson D."/>
            <person name="Merkulov G."/>
            <person name="Milshina N.V."/>
            <person name="Mobarry C."/>
            <person name="Morris J."/>
            <person name="Moshrefi A."/>
            <person name="Mount S.M."/>
            <person name="Moy M."/>
            <person name="Murphy B."/>
            <person name="Murphy L."/>
            <person name="Muzny D.M."/>
            <person name="Nelson D.L."/>
            <person name="Nelson D.R."/>
            <person name="Nelson K.A."/>
            <person name="Nixon K."/>
            <person name="Nusskern D.R."/>
            <person name="Pacleb J.M."/>
            <person name="Palazzolo M."/>
            <person name="Pittman G.S."/>
            <person name="Pan S."/>
            <person name="Pollard J."/>
            <person name="Puri V."/>
            <person name="Reese M.G."/>
            <person name="Reinert K."/>
            <person name="Remington K."/>
            <person name="Saunders R.D.C."/>
            <person name="Scheeler F."/>
            <person name="Shen H."/>
            <person name="Shue B.C."/>
            <person name="Siden-Kiamos I."/>
            <person name="Simpson M."/>
            <person name="Skupski M.P."/>
            <person name="Smith T.J."/>
            <person name="Spier E."/>
            <person name="Spradling A.C."/>
            <person name="Stapleton M."/>
            <person name="Strong R."/>
            <person name="Sun E."/>
            <person name="Svirskas R."/>
            <person name="Tector C."/>
            <person name="Turner R."/>
            <person name="Venter E."/>
            <person name="Wang A.H."/>
            <person name="Wang X."/>
            <person name="Wang Z.-Y."/>
            <person name="Wassarman D.A."/>
            <person name="Weinstock G.M."/>
            <person name="Weissenbach J."/>
            <person name="Williams S.M."/>
            <person name="Woodage T."/>
            <person name="Worley K.C."/>
            <person name="Wu D."/>
            <person name="Yang S."/>
            <person name="Yao Q.A."/>
            <person name="Ye J."/>
            <person name="Yeh R.-F."/>
            <person name="Zaveri J.S."/>
            <person name="Zhan M."/>
            <person name="Zhang G."/>
            <person name="Zhao Q."/>
            <person name="Zheng L."/>
            <person name="Zheng X.H."/>
            <person name="Zhong F.N."/>
            <person name="Zhong W."/>
            <person name="Zhou X."/>
            <person name="Zhu S.C."/>
            <person name="Zhu X."/>
            <person name="Smith H.O."/>
            <person name="Gibbs R.A."/>
            <person name="Myers E.W."/>
            <person name="Rubin G.M."/>
            <person name="Venter J.C."/>
        </authorList>
    </citation>
    <scope>NUCLEOTIDE SEQUENCE [LARGE SCALE GENOMIC DNA]</scope>
    <source>
        <strain>Berkeley</strain>
    </source>
</reference>
<reference key="2">
    <citation type="journal article" date="2002" name="Genome Biol.">
        <title>Annotation of the Drosophila melanogaster euchromatic genome: a systematic review.</title>
        <authorList>
            <person name="Misra S."/>
            <person name="Crosby M.A."/>
            <person name="Mungall C.J."/>
            <person name="Matthews B.B."/>
            <person name="Campbell K.S."/>
            <person name="Hradecky P."/>
            <person name="Huang Y."/>
            <person name="Kaminker J.S."/>
            <person name="Millburn G.H."/>
            <person name="Prochnik S.E."/>
            <person name="Smith C.D."/>
            <person name="Tupy J.L."/>
            <person name="Whitfield E.J."/>
            <person name="Bayraktaroglu L."/>
            <person name="Berman B.P."/>
            <person name="Bettencourt B.R."/>
            <person name="Celniker S.E."/>
            <person name="de Grey A.D.N.J."/>
            <person name="Drysdale R.A."/>
            <person name="Harris N.L."/>
            <person name="Richter J."/>
            <person name="Russo S."/>
            <person name="Schroeder A.J."/>
            <person name="Shu S.Q."/>
            <person name="Stapleton M."/>
            <person name="Yamada C."/>
            <person name="Ashburner M."/>
            <person name="Gelbart W.M."/>
            <person name="Rubin G.M."/>
            <person name="Lewis S.E."/>
        </authorList>
    </citation>
    <scope>GENOME REANNOTATION</scope>
    <source>
        <strain>Berkeley</strain>
    </source>
</reference>
<reference key="3">
    <citation type="journal article" date="2011" name="J. Neurosci.">
        <title>Similar odorants elicit different behavioral and physiological responses, some supersustained.</title>
        <authorList>
            <person name="Montague S.A."/>
            <person name="Mathew D."/>
            <person name="Carlson J.R."/>
        </authorList>
    </citation>
    <scope>FUNCTION</scope>
</reference>
<reference key="4">
    <citation type="journal article" date="2011" name="PLoS ONE">
        <title>Modeling peripheral olfactory coding in Drosophila larvae.</title>
        <authorList>
            <person name="Hoare D.J."/>
            <person name="Humble J."/>
            <person name="Jin D."/>
            <person name="Gilding N."/>
            <person name="Petersen R."/>
            <person name="Cobb M."/>
            <person name="McCrohan C."/>
        </authorList>
    </citation>
    <scope>FUNCTION</scope>
</reference>
<accession>Q9VLE5</accession>
<feature type="chain" id="PRO_0000174237" description="Odorant receptor 30a">
    <location>
        <begin position="1"/>
        <end position="377"/>
    </location>
</feature>
<feature type="topological domain" description="Cytoplasmic" evidence="2">
    <location>
        <begin position="1"/>
        <end position="34"/>
    </location>
</feature>
<feature type="transmembrane region" description="Helical; Name=1" evidence="2">
    <location>
        <begin position="35"/>
        <end position="55"/>
    </location>
</feature>
<feature type="topological domain" description="Extracellular" evidence="2">
    <location>
        <begin position="56"/>
        <end position="65"/>
    </location>
</feature>
<feature type="transmembrane region" description="Helical; Name=2" evidence="2">
    <location>
        <begin position="66"/>
        <end position="86"/>
    </location>
</feature>
<feature type="topological domain" description="Cytoplasmic" evidence="2">
    <location>
        <begin position="87"/>
        <end position="127"/>
    </location>
</feature>
<feature type="transmembrane region" description="Helical; Name=3" evidence="2">
    <location>
        <begin position="128"/>
        <end position="148"/>
    </location>
</feature>
<feature type="topological domain" description="Extracellular" evidence="2">
    <location>
        <begin position="149"/>
        <end position="172"/>
    </location>
</feature>
<feature type="transmembrane region" description="Helical; Name=4" evidence="2">
    <location>
        <begin position="173"/>
        <end position="193"/>
    </location>
</feature>
<feature type="topological domain" description="Cytoplasmic" evidence="2">
    <location>
        <begin position="194"/>
        <end position="254"/>
    </location>
</feature>
<feature type="transmembrane region" description="Helical; Name=5" evidence="2">
    <location>
        <begin position="255"/>
        <end position="275"/>
    </location>
</feature>
<feature type="topological domain" description="Extracellular" evidence="2">
    <location>
        <begin position="276"/>
        <end position="280"/>
    </location>
</feature>
<feature type="transmembrane region" description="Helical; Name=6" evidence="2">
    <location>
        <begin position="281"/>
        <end position="301"/>
    </location>
</feature>
<feature type="topological domain" description="Cytoplasmic" evidence="2">
    <location>
        <begin position="302"/>
        <end position="344"/>
    </location>
</feature>
<feature type="transmembrane region" description="Helical; Name=7" evidence="2">
    <location>
        <begin position="345"/>
        <end position="365"/>
    </location>
</feature>
<feature type="topological domain" description="Extracellular" evidence="2">
    <location>
        <begin position="366"/>
        <end position="377"/>
    </location>
</feature>
<evidence type="ECO:0000250" key="1"/>
<evidence type="ECO:0000255" key="2"/>
<evidence type="ECO:0000269" key="3">
    <source>
    </source>
</evidence>
<evidence type="ECO:0000269" key="4">
    <source>
    </source>
</evidence>
<evidence type="ECO:0000305" key="5"/>
<protein>
    <recommendedName>
        <fullName>Odorant receptor 30a</fullName>
    </recommendedName>
</protein>
<proteinExistence type="inferred from homology"/>
<gene>
    <name type="primary">Or30a</name>
    <name type="ORF">CG13106</name>
</gene>
<comment type="function">
    <text evidence="3 4">Odorant receptor which mediates acceptance or avoidance behavior, depending on its substrates. The odorant receptor repertoire encodes a large collection of odor stimuli that vary widely in identity, intensity, and duration. May form a complex with Orco to form odorant-sensing units, providing sensitive and prolonged odorant signaling and calcium permeability. Involved in the behavioral responses to propyl acetate and anisole.</text>
</comment>
<comment type="subunit">
    <text evidence="1">Interacts with Orco. Complexes exist early in the endomembrane system in olfactory sensory neurons (OSNs), coupling these complexes to the conserved ciliary trafficking pathway (By similarity).</text>
</comment>
<comment type="subcellular location">
    <subcellularLocation>
        <location evidence="1">Cell membrane</location>
        <topology evidence="1">Multi-pass membrane protein</topology>
    </subcellularLocation>
</comment>
<comment type="miscellaneous">
    <text>The atypical heteromeric and topological design of the odorant receptors appears to be an insect-specific solution for odor recognition, making the OR/Orco complex an attractive target for the development of highly selective insect repellents to disrupt olfactory-mediated host-seeking behaviors of insect disease vectors. Odor-evoked OR currents are independent of known G-protein-coupled second messenger pathways.</text>
</comment>
<comment type="similarity">
    <text evidence="5">Belongs to the insect chemoreceptor superfamily. Heteromeric odorant receptor channel (TC 1.A.69) family. Or30a subfamily.</text>
</comment>
<organism>
    <name type="scientific">Drosophila melanogaster</name>
    <name type="common">Fruit fly</name>
    <dbReference type="NCBI Taxonomy" id="7227"/>
    <lineage>
        <taxon>Eukaryota</taxon>
        <taxon>Metazoa</taxon>
        <taxon>Ecdysozoa</taxon>
        <taxon>Arthropoda</taxon>
        <taxon>Hexapoda</taxon>
        <taxon>Insecta</taxon>
        <taxon>Pterygota</taxon>
        <taxon>Neoptera</taxon>
        <taxon>Endopterygota</taxon>
        <taxon>Diptera</taxon>
        <taxon>Brachycera</taxon>
        <taxon>Muscomorpha</taxon>
        <taxon>Ephydroidea</taxon>
        <taxon>Drosophilidae</taxon>
        <taxon>Drosophila</taxon>
        <taxon>Sophophora</taxon>
    </lineage>
</organism>
<name>OR30A_DROME</name>
<dbReference type="EMBL" id="AE014134">
    <property type="protein sequence ID" value="AAF52748.3"/>
    <property type="molecule type" value="Genomic_DNA"/>
</dbReference>
<dbReference type="RefSeq" id="NP_523520.2">
    <property type="nucleotide sequence ID" value="NM_078796.3"/>
</dbReference>
<dbReference type="SMR" id="Q9VLE5"/>
<dbReference type="FunCoup" id="Q9VLE5">
    <property type="interactions" value="39"/>
</dbReference>
<dbReference type="STRING" id="7227.FBpp0079371"/>
<dbReference type="PaxDb" id="7227-FBpp0079371"/>
<dbReference type="EnsemblMetazoa" id="FBtr0079770">
    <property type="protein sequence ID" value="FBpp0079371"/>
    <property type="gene ID" value="FBgn0032096"/>
</dbReference>
<dbReference type="GeneID" id="34236"/>
<dbReference type="KEGG" id="dme:Dmel_CG13106"/>
<dbReference type="AGR" id="FB:FBgn0032096"/>
<dbReference type="CTD" id="34236"/>
<dbReference type="FlyBase" id="FBgn0032096">
    <property type="gene designation" value="Or30a"/>
</dbReference>
<dbReference type="VEuPathDB" id="VectorBase:FBgn0032096"/>
<dbReference type="eggNOG" id="ENOG502STQW">
    <property type="taxonomic scope" value="Eukaryota"/>
</dbReference>
<dbReference type="GeneTree" id="ENSGT00520000056289"/>
<dbReference type="HOGENOM" id="CLU_033399_9_0_1"/>
<dbReference type="InParanoid" id="Q9VLE5"/>
<dbReference type="OMA" id="YIPYTNM"/>
<dbReference type="OrthoDB" id="7677057at2759"/>
<dbReference type="PhylomeDB" id="Q9VLE5"/>
<dbReference type="BioGRID-ORCS" id="34236">
    <property type="hits" value="0 hits in 1 CRISPR screen"/>
</dbReference>
<dbReference type="GenomeRNAi" id="34236"/>
<dbReference type="PRO" id="PR:Q9VLE5"/>
<dbReference type="Proteomes" id="UP000000803">
    <property type="component" value="Chromosome 2L"/>
</dbReference>
<dbReference type="ExpressionAtlas" id="Q9VLE5">
    <property type="expression patterns" value="differential"/>
</dbReference>
<dbReference type="GO" id="GO:0034703">
    <property type="term" value="C:cation channel complex"/>
    <property type="evidence" value="ECO:0000250"/>
    <property type="project" value="FlyBase"/>
</dbReference>
<dbReference type="GO" id="GO:0032590">
    <property type="term" value="C:dendrite membrane"/>
    <property type="evidence" value="ECO:0000250"/>
    <property type="project" value="FlyBase"/>
</dbReference>
<dbReference type="GO" id="GO:0005886">
    <property type="term" value="C:plasma membrane"/>
    <property type="evidence" value="ECO:0000250"/>
    <property type="project" value="FlyBase"/>
</dbReference>
<dbReference type="GO" id="GO:0170020">
    <property type="term" value="F:ionotropic olfactory receptor activity"/>
    <property type="evidence" value="ECO:0000250"/>
    <property type="project" value="FlyBase"/>
</dbReference>
<dbReference type="GO" id="GO:0005549">
    <property type="term" value="F:odorant binding"/>
    <property type="evidence" value="ECO:0000250"/>
    <property type="project" value="FlyBase"/>
</dbReference>
<dbReference type="GO" id="GO:0004984">
    <property type="term" value="F:olfactory receptor activity"/>
    <property type="evidence" value="ECO:0000318"/>
    <property type="project" value="GO_Central"/>
</dbReference>
<dbReference type="GO" id="GO:0050911">
    <property type="term" value="P:detection of chemical stimulus involved in sensory perception of smell"/>
    <property type="evidence" value="ECO:0000315"/>
    <property type="project" value="FlyBase"/>
</dbReference>
<dbReference type="GO" id="GO:0007165">
    <property type="term" value="P:signal transduction"/>
    <property type="evidence" value="ECO:0007669"/>
    <property type="project" value="UniProtKB-KW"/>
</dbReference>
<dbReference type="InterPro" id="IPR004117">
    <property type="entry name" value="7tm6_olfct_rcpt"/>
</dbReference>
<dbReference type="PANTHER" id="PTHR21137">
    <property type="entry name" value="ODORANT RECEPTOR"/>
    <property type="match status" value="1"/>
</dbReference>
<dbReference type="PANTHER" id="PTHR21137:SF3">
    <property type="entry name" value="ODORANT RECEPTOR 30A-RELATED"/>
    <property type="match status" value="1"/>
</dbReference>
<dbReference type="Pfam" id="PF02949">
    <property type="entry name" value="7tm_6"/>
    <property type="match status" value="1"/>
</dbReference>
<keyword id="KW-1003">Cell membrane</keyword>
<keyword id="KW-0472">Membrane</keyword>
<keyword id="KW-0552">Olfaction</keyword>
<keyword id="KW-0675">Receptor</keyword>
<keyword id="KW-1185">Reference proteome</keyword>
<keyword id="KW-0716">Sensory transduction</keyword>
<keyword id="KW-0807">Transducer</keyword>
<keyword id="KW-0812">Transmembrane</keyword>
<keyword id="KW-1133">Transmembrane helix</keyword>